<reference key="1">
    <citation type="submission" date="2006-10" db="EMBL/GenBank/DDBJ databases">
        <title>Complete sequence of chromosome of Pelobacter propionicus DSM 2379.</title>
        <authorList>
            <consortium name="US DOE Joint Genome Institute"/>
            <person name="Copeland A."/>
            <person name="Lucas S."/>
            <person name="Lapidus A."/>
            <person name="Barry K."/>
            <person name="Detter J.C."/>
            <person name="Glavina del Rio T."/>
            <person name="Hammon N."/>
            <person name="Israni S."/>
            <person name="Dalin E."/>
            <person name="Tice H."/>
            <person name="Pitluck S."/>
            <person name="Saunders E."/>
            <person name="Brettin T."/>
            <person name="Bruce D."/>
            <person name="Han C."/>
            <person name="Tapia R."/>
            <person name="Schmutz J."/>
            <person name="Larimer F."/>
            <person name="Land M."/>
            <person name="Hauser L."/>
            <person name="Kyrpides N."/>
            <person name="Kim E."/>
            <person name="Lovley D."/>
            <person name="Richardson P."/>
        </authorList>
    </citation>
    <scope>NUCLEOTIDE SEQUENCE [LARGE SCALE GENOMIC DNA]</scope>
    <source>
        <strain>DSM 2379 / NBRC 103807 / OttBd1</strain>
    </source>
</reference>
<keyword id="KW-1185">Reference proteome</keyword>
<keyword id="KW-0687">Ribonucleoprotein</keyword>
<keyword id="KW-0689">Ribosomal protein</keyword>
<keyword id="KW-0694">RNA-binding</keyword>
<keyword id="KW-0699">rRNA-binding</keyword>
<gene>
    <name evidence="1" type="primary">rplO</name>
    <name type="ordered locus">Ppro_0699</name>
</gene>
<evidence type="ECO:0000255" key="1">
    <source>
        <dbReference type="HAMAP-Rule" id="MF_01341"/>
    </source>
</evidence>
<evidence type="ECO:0000256" key="2">
    <source>
        <dbReference type="SAM" id="MobiDB-lite"/>
    </source>
</evidence>
<evidence type="ECO:0000305" key="3"/>
<proteinExistence type="inferred from homology"/>
<name>RL15_PELPD</name>
<organism>
    <name type="scientific">Pelobacter propionicus (strain DSM 2379 / NBRC 103807 / OttBd1)</name>
    <dbReference type="NCBI Taxonomy" id="338966"/>
    <lineage>
        <taxon>Bacteria</taxon>
        <taxon>Pseudomonadati</taxon>
        <taxon>Thermodesulfobacteriota</taxon>
        <taxon>Desulfuromonadia</taxon>
        <taxon>Desulfuromonadales</taxon>
        <taxon>Desulfuromonadaceae</taxon>
        <taxon>Pelobacter</taxon>
    </lineage>
</organism>
<feature type="chain" id="PRO_1000054509" description="Large ribosomal subunit protein uL15">
    <location>
        <begin position="1"/>
        <end position="147"/>
    </location>
</feature>
<feature type="region of interest" description="Disordered" evidence="2">
    <location>
        <begin position="1"/>
        <end position="62"/>
    </location>
</feature>
<feature type="compositionally biased region" description="Basic residues" evidence="2">
    <location>
        <begin position="30"/>
        <end position="39"/>
    </location>
</feature>
<comment type="function">
    <text evidence="1">Binds to the 23S rRNA.</text>
</comment>
<comment type="subunit">
    <text evidence="1">Part of the 50S ribosomal subunit.</text>
</comment>
<comment type="similarity">
    <text evidence="1">Belongs to the universal ribosomal protein uL15 family.</text>
</comment>
<protein>
    <recommendedName>
        <fullName evidence="1">Large ribosomal subunit protein uL15</fullName>
    </recommendedName>
    <alternativeName>
        <fullName evidence="3">50S ribosomal protein L15</fullName>
    </alternativeName>
</protein>
<accession>A1ALW0</accession>
<sequence>MDLNTLKPALGSVKQGKRIGRGPGSGHGKTATKGHKGQKARSGGSIKAGFEGGQMPLQRRLPKRGFTPLSRVEYAIVNLKQLDAFEANSSVDTESLVAMGLVKSTACAVKILGNGDLAKSLRVSASKFSQSAKDKILAAGGTVEETV</sequence>
<dbReference type="EMBL" id="CP000482">
    <property type="protein sequence ID" value="ABK98330.1"/>
    <property type="molecule type" value="Genomic_DNA"/>
</dbReference>
<dbReference type="RefSeq" id="WP_011734642.1">
    <property type="nucleotide sequence ID" value="NC_008609.1"/>
</dbReference>
<dbReference type="SMR" id="A1ALW0"/>
<dbReference type="STRING" id="338966.Ppro_0699"/>
<dbReference type="KEGG" id="ppd:Ppro_0699"/>
<dbReference type="eggNOG" id="COG0200">
    <property type="taxonomic scope" value="Bacteria"/>
</dbReference>
<dbReference type="HOGENOM" id="CLU_055188_4_2_7"/>
<dbReference type="OrthoDB" id="9810293at2"/>
<dbReference type="Proteomes" id="UP000006732">
    <property type="component" value="Chromosome"/>
</dbReference>
<dbReference type="GO" id="GO:0022625">
    <property type="term" value="C:cytosolic large ribosomal subunit"/>
    <property type="evidence" value="ECO:0007669"/>
    <property type="project" value="TreeGrafter"/>
</dbReference>
<dbReference type="GO" id="GO:0019843">
    <property type="term" value="F:rRNA binding"/>
    <property type="evidence" value="ECO:0007669"/>
    <property type="project" value="UniProtKB-UniRule"/>
</dbReference>
<dbReference type="GO" id="GO:0003735">
    <property type="term" value="F:structural constituent of ribosome"/>
    <property type="evidence" value="ECO:0007669"/>
    <property type="project" value="InterPro"/>
</dbReference>
<dbReference type="GO" id="GO:0006412">
    <property type="term" value="P:translation"/>
    <property type="evidence" value="ECO:0007669"/>
    <property type="project" value="UniProtKB-UniRule"/>
</dbReference>
<dbReference type="Gene3D" id="3.100.10.10">
    <property type="match status" value="1"/>
</dbReference>
<dbReference type="HAMAP" id="MF_01341">
    <property type="entry name" value="Ribosomal_uL15"/>
    <property type="match status" value="1"/>
</dbReference>
<dbReference type="InterPro" id="IPR030878">
    <property type="entry name" value="Ribosomal_uL15"/>
</dbReference>
<dbReference type="InterPro" id="IPR021131">
    <property type="entry name" value="Ribosomal_uL15/eL18"/>
</dbReference>
<dbReference type="InterPro" id="IPR036227">
    <property type="entry name" value="Ribosomal_uL15/eL18_sf"/>
</dbReference>
<dbReference type="InterPro" id="IPR005749">
    <property type="entry name" value="Ribosomal_uL15_bac-type"/>
</dbReference>
<dbReference type="InterPro" id="IPR001196">
    <property type="entry name" value="Ribosomal_uL15_CS"/>
</dbReference>
<dbReference type="NCBIfam" id="TIGR01071">
    <property type="entry name" value="rplO_bact"/>
    <property type="match status" value="1"/>
</dbReference>
<dbReference type="PANTHER" id="PTHR12934">
    <property type="entry name" value="50S RIBOSOMAL PROTEIN L15"/>
    <property type="match status" value="1"/>
</dbReference>
<dbReference type="PANTHER" id="PTHR12934:SF11">
    <property type="entry name" value="LARGE RIBOSOMAL SUBUNIT PROTEIN UL15M"/>
    <property type="match status" value="1"/>
</dbReference>
<dbReference type="Pfam" id="PF00828">
    <property type="entry name" value="Ribosomal_L27A"/>
    <property type="match status" value="1"/>
</dbReference>
<dbReference type="SUPFAM" id="SSF52080">
    <property type="entry name" value="Ribosomal proteins L15p and L18e"/>
    <property type="match status" value="1"/>
</dbReference>
<dbReference type="PROSITE" id="PS00475">
    <property type="entry name" value="RIBOSOMAL_L15"/>
    <property type="match status" value="1"/>
</dbReference>